<name>LDHB_ANGRO</name>
<organism>
    <name type="scientific">Anguilla rostrata</name>
    <name type="common">American eel</name>
    <name type="synonym">Muraena rostrata</name>
    <dbReference type="NCBI Taxonomy" id="7938"/>
    <lineage>
        <taxon>Eukaryota</taxon>
        <taxon>Metazoa</taxon>
        <taxon>Chordata</taxon>
        <taxon>Craniata</taxon>
        <taxon>Vertebrata</taxon>
        <taxon>Euteleostomi</taxon>
        <taxon>Actinopterygii</taxon>
        <taxon>Neopterygii</taxon>
        <taxon>Teleostei</taxon>
        <taxon>Anguilliformes</taxon>
        <taxon>Anguillidae</taxon>
        <taxon>Anguilla</taxon>
    </lineage>
</organism>
<reference key="1">
    <citation type="thesis" date="1994" institute="University of Hong Kong" country="Hong Kong">
        <title>Biochemical and molecular studies of lactate dehydrogenase isoenzymes in the freshwater eels.</title>
        <authorList>
            <person name="Tsoi S.C.-M."/>
        </authorList>
    </citation>
    <scope>NUCLEOTIDE SEQUENCE [MRNA]</scope>
</reference>
<feature type="initiator methionine" description="Removed" evidence="1">
    <location>
        <position position="1"/>
    </location>
</feature>
<feature type="chain" id="PRO_0000168474" description="L-lactate dehydrogenase B chain">
    <location>
        <begin position="2"/>
        <end position="333"/>
    </location>
</feature>
<feature type="active site" description="Proton acceptor" evidence="1">
    <location>
        <position position="193"/>
    </location>
</feature>
<feature type="binding site" evidence="1">
    <location>
        <begin position="29"/>
        <end position="57"/>
    </location>
    <ligand>
        <name>NAD(+)</name>
        <dbReference type="ChEBI" id="CHEBI:57540"/>
    </ligand>
</feature>
<feature type="binding site" evidence="1">
    <location>
        <position position="99"/>
    </location>
    <ligand>
        <name>NAD(+)</name>
        <dbReference type="ChEBI" id="CHEBI:57540"/>
    </ligand>
</feature>
<feature type="binding site" evidence="1">
    <location>
        <position position="106"/>
    </location>
    <ligand>
        <name>substrate</name>
    </ligand>
</feature>
<feature type="binding site" evidence="1">
    <location>
        <position position="138"/>
    </location>
    <ligand>
        <name>NAD(+)</name>
        <dbReference type="ChEBI" id="CHEBI:57540"/>
    </ligand>
</feature>
<feature type="binding site" evidence="1">
    <location>
        <position position="138"/>
    </location>
    <ligand>
        <name>substrate</name>
    </ligand>
</feature>
<feature type="binding site" evidence="1">
    <location>
        <position position="169"/>
    </location>
    <ligand>
        <name>substrate</name>
    </ligand>
</feature>
<feature type="binding site" evidence="1">
    <location>
        <position position="248"/>
    </location>
    <ligand>
        <name>substrate</name>
    </ligand>
</feature>
<proteinExistence type="evidence at transcript level"/>
<sequence length="333" mass="36475">MASVMQKLITPLCSGPQRPRNKVTVVGVGQVGMACAVSILMRELADELALVDVIEDKLKGEMMDLQHGSLFLKTSKIVADKDYSVSANSRIVVVTAGVRHREGESRLNLVQRNVNIFKHIIPQIVKYSPDCILVVVSNPVDVLTYVTWKLSGLPKHRVIGSGTNLDSARFRYLMAEKLGIHSSSFNGWILGEHGDSSVPVWSGANVAGVNLQKLNPDIGTDADKENWKDAHKMVVESAYEVIRLKGYTNWAIGLSVADLAETLIKNLNRIHPVSTMVKGMYGIGDEVYLSLPCVLNNGGVNSVVNMTLTDEEIAQLKKSADTLWGIQKDLKDL</sequence>
<accession>Q9YGL2</accession>
<protein>
    <recommendedName>
        <fullName>L-lactate dehydrogenase B chain</fullName>
        <shortName>LDH-B</shortName>
        <ecNumber evidence="2">1.1.1.27</ecNumber>
    </recommendedName>
</protein>
<keyword id="KW-0963">Cytoplasm</keyword>
<keyword id="KW-0520">NAD</keyword>
<keyword id="KW-0560">Oxidoreductase</keyword>
<gene>
    <name type="primary">ldhb</name>
</gene>
<dbReference type="EC" id="1.1.1.27" evidence="2"/>
<dbReference type="EMBL" id="U21850">
    <property type="protein sequence ID" value="AAD15625.1"/>
    <property type="molecule type" value="mRNA"/>
</dbReference>
<dbReference type="SMR" id="Q9YGL2"/>
<dbReference type="UniPathway" id="UPA00554">
    <property type="reaction ID" value="UER00611"/>
</dbReference>
<dbReference type="GO" id="GO:0005737">
    <property type="term" value="C:cytoplasm"/>
    <property type="evidence" value="ECO:0007669"/>
    <property type="project" value="UniProtKB-SubCell"/>
</dbReference>
<dbReference type="GO" id="GO:0004459">
    <property type="term" value="F:L-lactate dehydrogenase activity"/>
    <property type="evidence" value="ECO:0007669"/>
    <property type="project" value="UniProtKB-EC"/>
</dbReference>
<dbReference type="GO" id="GO:0006089">
    <property type="term" value="P:lactate metabolic process"/>
    <property type="evidence" value="ECO:0007669"/>
    <property type="project" value="TreeGrafter"/>
</dbReference>
<dbReference type="CDD" id="cd05293">
    <property type="entry name" value="LDH_1"/>
    <property type="match status" value="1"/>
</dbReference>
<dbReference type="FunFam" id="3.40.50.720:FF:000029">
    <property type="entry name" value="L-lactate dehydrogenase A chain"/>
    <property type="match status" value="1"/>
</dbReference>
<dbReference type="FunFam" id="3.90.110.10:FF:000003">
    <property type="entry name" value="L-lactate dehydrogenase A chain"/>
    <property type="match status" value="1"/>
</dbReference>
<dbReference type="Gene3D" id="3.90.110.10">
    <property type="entry name" value="Lactate dehydrogenase/glycoside hydrolase, family 4, C-terminal"/>
    <property type="match status" value="1"/>
</dbReference>
<dbReference type="Gene3D" id="3.40.50.720">
    <property type="entry name" value="NAD(P)-binding Rossmann-like Domain"/>
    <property type="match status" value="1"/>
</dbReference>
<dbReference type="HAMAP" id="MF_00488">
    <property type="entry name" value="Lactate_dehydrog"/>
    <property type="match status" value="1"/>
</dbReference>
<dbReference type="InterPro" id="IPR001557">
    <property type="entry name" value="L-lactate/malate_DH"/>
</dbReference>
<dbReference type="InterPro" id="IPR011304">
    <property type="entry name" value="L-lactate_DH"/>
</dbReference>
<dbReference type="InterPro" id="IPR018177">
    <property type="entry name" value="L-lactate_DH_AS"/>
</dbReference>
<dbReference type="InterPro" id="IPR022383">
    <property type="entry name" value="Lactate/malate_DH_C"/>
</dbReference>
<dbReference type="InterPro" id="IPR001236">
    <property type="entry name" value="Lactate/malate_DH_N"/>
</dbReference>
<dbReference type="InterPro" id="IPR015955">
    <property type="entry name" value="Lactate_DH/Glyco_Ohase_4_C"/>
</dbReference>
<dbReference type="InterPro" id="IPR036291">
    <property type="entry name" value="NAD(P)-bd_dom_sf"/>
</dbReference>
<dbReference type="NCBIfam" id="TIGR01771">
    <property type="entry name" value="L-LDH-NAD"/>
    <property type="match status" value="1"/>
</dbReference>
<dbReference type="NCBIfam" id="NF000824">
    <property type="entry name" value="PRK00066.1"/>
    <property type="match status" value="1"/>
</dbReference>
<dbReference type="NCBIfam" id="NF004863">
    <property type="entry name" value="PRK06223.1"/>
    <property type="match status" value="1"/>
</dbReference>
<dbReference type="PANTHER" id="PTHR43128">
    <property type="entry name" value="L-2-HYDROXYCARBOXYLATE DEHYDROGENASE (NAD(P)(+))"/>
    <property type="match status" value="1"/>
</dbReference>
<dbReference type="PANTHER" id="PTHR43128:SF2">
    <property type="entry name" value="L-LACTATE DEHYDROGENASE B CHAIN"/>
    <property type="match status" value="1"/>
</dbReference>
<dbReference type="Pfam" id="PF02866">
    <property type="entry name" value="Ldh_1_C"/>
    <property type="match status" value="1"/>
</dbReference>
<dbReference type="Pfam" id="PF00056">
    <property type="entry name" value="Ldh_1_N"/>
    <property type="match status" value="1"/>
</dbReference>
<dbReference type="PIRSF" id="PIRSF000102">
    <property type="entry name" value="Lac_mal_DH"/>
    <property type="match status" value="1"/>
</dbReference>
<dbReference type="PRINTS" id="PR00086">
    <property type="entry name" value="LLDHDRGNASE"/>
</dbReference>
<dbReference type="SUPFAM" id="SSF56327">
    <property type="entry name" value="LDH C-terminal domain-like"/>
    <property type="match status" value="1"/>
</dbReference>
<dbReference type="SUPFAM" id="SSF51735">
    <property type="entry name" value="NAD(P)-binding Rossmann-fold domains"/>
    <property type="match status" value="1"/>
</dbReference>
<dbReference type="PROSITE" id="PS00064">
    <property type="entry name" value="L_LDH"/>
    <property type="match status" value="1"/>
</dbReference>
<comment type="function">
    <text evidence="2">Interconverts simultaneously and stereospecifically pyruvate and lactate with concomitant interconversion of NADH and NAD(+).</text>
</comment>
<comment type="catalytic activity">
    <reaction evidence="2">
        <text>(S)-lactate + NAD(+) = pyruvate + NADH + H(+)</text>
        <dbReference type="Rhea" id="RHEA:23444"/>
        <dbReference type="ChEBI" id="CHEBI:15361"/>
        <dbReference type="ChEBI" id="CHEBI:15378"/>
        <dbReference type="ChEBI" id="CHEBI:16651"/>
        <dbReference type="ChEBI" id="CHEBI:57540"/>
        <dbReference type="ChEBI" id="CHEBI:57945"/>
        <dbReference type="EC" id="1.1.1.27"/>
    </reaction>
    <physiologicalReaction direction="left-to-right" evidence="2">
        <dbReference type="Rhea" id="RHEA:23445"/>
    </physiologicalReaction>
    <physiologicalReaction direction="right-to-left" evidence="2">
        <dbReference type="Rhea" id="RHEA:23446"/>
    </physiologicalReaction>
</comment>
<comment type="pathway">
    <text evidence="2">Fermentation; pyruvate fermentation to lactate; (S)-lactate from pyruvate: step 1/1.</text>
</comment>
<comment type="subunit">
    <text evidence="1">Homotetramer.</text>
</comment>
<comment type="subcellular location">
    <subcellularLocation>
        <location evidence="1">Cytoplasm</location>
    </subcellularLocation>
</comment>
<comment type="similarity">
    <text evidence="3">Belongs to the LDH/MDH superfamily. LDH family.</text>
</comment>
<evidence type="ECO:0000250" key="1"/>
<evidence type="ECO:0000250" key="2">
    <source>
        <dbReference type="UniProtKB" id="P07195"/>
    </source>
</evidence>
<evidence type="ECO:0000305" key="3"/>